<gene>
    <name evidence="1" type="primary">tsaD</name>
    <name type="synonym">gcp</name>
    <name type="ordered locus">CTLon_0444</name>
</gene>
<reference key="1">
    <citation type="journal article" date="2008" name="Genome Res.">
        <title>Chlamydia trachomatis: genome sequence analysis of lymphogranuloma venereum isolates.</title>
        <authorList>
            <person name="Thomson N.R."/>
            <person name="Holden M.T.G."/>
            <person name="Carder C."/>
            <person name="Lennard N."/>
            <person name="Lockey S.J."/>
            <person name="Marsh P."/>
            <person name="Skipp P."/>
            <person name="O'Connor C.D."/>
            <person name="Goodhead I."/>
            <person name="Norbertzcak H."/>
            <person name="Harris B."/>
            <person name="Ormond D."/>
            <person name="Rance R."/>
            <person name="Quail M.A."/>
            <person name="Parkhill J."/>
            <person name="Stephens R.S."/>
            <person name="Clarke I.N."/>
        </authorList>
    </citation>
    <scope>NUCLEOTIDE SEQUENCE [LARGE SCALE GENOMIC DNA]</scope>
    <source>
        <strain>UCH-1/proctitis</strain>
    </source>
</reference>
<sequence length="338" mass="35892">MLTLGLESSCDETSCSLVQNGKILANKIASQDIHASYGGVIPELASRAHLQTFPELLTAATQSAGVSLEDIELISVANTPGLIGALSIGVNFAKGLASGLKRPLIGVNHVEAHLYAACMEAPATQFPALGLAISGAHTSLFLMPDATTFLLIGKTRDDAIGETFDKVARFLGLPYPGGQKLEELAREGDADAFAFSPARVSGYDFSFSGLKTAVLYALKGNNSSAKAPFPEVSETQKRNIAASFQKAVFMTIAQKLPDIVKAFSCESLIVGGGVANNSYFRRLLNQICSLPIYFPSSQLCSDNAAMIAGLGERLFCNRTHVSKEVIPCARYQWESACS</sequence>
<feature type="chain" id="PRO_1000145965" description="tRNA N6-adenosine threonylcarbamoyltransferase">
    <location>
        <begin position="1"/>
        <end position="338"/>
    </location>
</feature>
<feature type="binding site" evidence="1">
    <location>
        <position position="109"/>
    </location>
    <ligand>
        <name>Fe cation</name>
        <dbReference type="ChEBI" id="CHEBI:24875"/>
    </ligand>
</feature>
<feature type="binding site" evidence="1">
    <location>
        <position position="113"/>
    </location>
    <ligand>
        <name>Fe cation</name>
        <dbReference type="ChEBI" id="CHEBI:24875"/>
    </ligand>
</feature>
<feature type="binding site" evidence="1">
    <location>
        <begin position="132"/>
        <end position="136"/>
    </location>
    <ligand>
        <name>substrate</name>
    </ligand>
</feature>
<feature type="binding site" evidence="1">
    <location>
        <position position="165"/>
    </location>
    <ligand>
        <name>substrate</name>
    </ligand>
</feature>
<feature type="binding site" evidence="1">
    <location>
        <position position="178"/>
    </location>
    <ligand>
        <name>substrate</name>
    </ligand>
</feature>
<feature type="binding site" evidence="1">
    <location>
        <position position="277"/>
    </location>
    <ligand>
        <name>substrate</name>
    </ligand>
</feature>
<feature type="binding site" evidence="1">
    <location>
        <position position="302"/>
    </location>
    <ligand>
        <name>Fe cation</name>
        <dbReference type="ChEBI" id="CHEBI:24875"/>
    </ligand>
</feature>
<name>TSAD_CHLTB</name>
<protein>
    <recommendedName>
        <fullName evidence="1">tRNA N6-adenosine threonylcarbamoyltransferase</fullName>
        <ecNumber evidence="1">2.3.1.234</ecNumber>
    </recommendedName>
    <alternativeName>
        <fullName evidence="1">N6-L-threonylcarbamoyladenine synthase</fullName>
        <shortName evidence="1">t(6)A synthase</shortName>
    </alternativeName>
    <alternativeName>
        <fullName evidence="1">t(6)A37 threonylcarbamoyladenosine biosynthesis protein TsaD</fullName>
    </alternativeName>
    <alternativeName>
        <fullName evidence="1">tRNA threonylcarbamoyladenosine biosynthesis protein TsaD</fullName>
    </alternativeName>
</protein>
<keyword id="KW-0012">Acyltransferase</keyword>
<keyword id="KW-0963">Cytoplasm</keyword>
<keyword id="KW-0408">Iron</keyword>
<keyword id="KW-0479">Metal-binding</keyword>
<keyword id="KW-0808">Transferase</keyword>
<keyword id="KW-0819">tRNA processing</keyword>
<organism>
    <name type="scientific">Chlamydia trachomatis serovar L2b (strain UCH-1/proctitis)</name>
    <dbReference type="NCBI Taxonomy" id="471473"/>
    <lineage>
        <taxon>Bacteria</taxon>
        <taxon>Pseudomonadati</taxon>
        <taxon>Chlamydiota</taxon>
        <taxon>Chlamydiia</taxon>
        <taxon>Chlamydiales</taxon>
        <taxon>Chlamydiaceae</taxon>
        <taxon>Chlamydia/Chlamydophila group</taxon>
        <taxon>Chlamydia</taxon>
    </lineage>
</organism>
<proteinExistence type="inferred from homology"/>
<comment type="function">
    <text evidence="1">Required for the formation of a threonylcarbamoyl group on adenosine at position 37 (t(6)A37) in tRNAs that read codons beginning with adenine. Is involved in the transfer of the threonylcarbamoyl moiety of threonylcarbamoyl-AMP (TC-AMP) to the N6 group of A37, together with TsaE and TsaB. TsaD likely plays a direct catalytic role in this reaction.</text>
</comment>
<comment type="catalytic activity">
    <reaction evidence="1">
        <text>L-threonylcarbamoyladenylate + adenosine(37) in tRNA = N(6)-L-threonylcarbamoyladenosine(37) in tRNA + AMP + H(+)</text>
        <dbReference type="Rhea" id="RHEA:37059"/>
        <dbReference type="Rhea" id="RHEA-COMP:10162"/>
        <dbReference type="Rhea" id="RHEA-COMP:10163"/>
        <dbReference type="ChEBI" id="CHEBI:15378"/>
        <dbReference type="ChEBI" id="CHEBI:73682"/>
        <dbReference type="ChEBI" id="CHEBI:74411"/>
        <dbReference type="ChEBI" id="CHEBI:74418"/>
        <dbReference type="ChEBI" id="CHEBI:456215"/>
        <dbReference type="EC" id="2.3.1.234"/>
    </reaction>
</comment>
<comment type="cofactor">
    <cofactor evidence="1">
        <name>Fe(2+)</name>
        <dbReference type="ChEBI" id="CHEBI:29033"/>
    </cofactor>
    <text evidence="1">Binds 1 Fe(2+) ion per subunit.</text>
</comment>
<comment type="subcellular location">
    <subcellularLocation>
        <location evidence="1">Cytoplasm</location>
    </subcellularLocation>
</comment>
<comment type="similarity">
    <text evidence="1">Belongs to the KAE1 / TsaD family.</text>
</comment>
<dbReference type="EC" id="2.3.1.234" evidence="1"/>
<dbReference type="EMBL" id="AM884177">
    <property type="protein sequence ID" value="CAP06842.1"/>
    <property type="molecule type" value="Genomic_DNA"/>
</dbReference>
<dbReference type="RefSeq" id="WP_009872452.1">
    <property type="nucleotide sequence ID" value="NC_010280.2"/>
</dbReference>
<dbReference type="SMR" id="B0BBH7"/>
<dbReference type="KEGG" id="ctl:CTLon_0444"/>
<dbReference type="HOGENOM" id="CLU_023208_0_2_0"/>
<dbReference type="Proteomes" id="UP001154401">
    <property type="component" value="Chromosome"/>
</dbReference>
<dbReference type="GO" id="GO:0005737">
    <property type="term" value="C:cytoplasm"/>
    <property type="evidence" value="ECO:0007669"/>
    <property type="project" value="UniProtKB-SubCell"/>
</dbReference>
<dbReference type="GO" id="GO:0005506">
    <property type="term" value="F:iron ion binding"/>
    <property type="evidence" value="ECO:0007669"/>
    <property type="project" value="UniProtKB-UniRule"/>
</dbReference>
<dbReference type="GO" id="GO:0061711">
    <property type="term" value="F:N(6)-L-threonylcarbamoyladenine synthase activity"/>
    <property type="evidence" value="ECO:0007669"/>
    <property type="project" value="UniProtKB-EC"/>
</dbReference>
<dbReference type="GO" id="GO:0002949">
    <property type="term" value="P:tRNA threonylcarbamoyladenosine modification"/>
    <property type="evidence" value="ECO:0007669"/>
    <property type="project" value="UniProtKB-UniRule"/>
</dbReference>
<dbReference type="CDD" id="cd24133">
    <property type="entry name" value="ASKHA_NBD_TsaD_bac"/>
    <property type="match status" value="1"/>
</dbReference>
<dbReference type="FunFam" id="3.30.420.40:FF:000012">
    <property type="entry name" value="tRNA N6-adenosine threonylcarbamoyltransferase"/>
    <property type="match status" value="1"/>
</dbReference>
<dbReference type="FunFam" id="3.30.420.40:FF:000288">
    <property type="entry name" value="tRNA N6-adenosine threonylcarbamoyltransferase"/>
    <property type="match status" value="1"/>
</dbReference>
<dbReference type="Gene3D" id="3.30.420.40">
    <property type="match status" value="2"/>
</dbReference>
<dbReference type="HAMAP" id="MF_01445">
    <property type="entry name" value="TsaD"/>
    <property type="match status" value="1"/>
</dbReference>
<dbReference type="InterPro" id="IPR043129">
    <property type="entry name" value="ATPase_NBD"/>
</dbReference>
<dbReference type="InterPro" id="IPR000905">
    <property type="entry name" value="Gcp-like_dom"/>
</dbReference>
<dbReference type="InterPro" id="IPR017861">
    <property type="entry name" value="KAE1/TsaD"/>
</dbReference>
<dbReference type="InterPro" id="IPR017860">
    <property type="entry name" value="Peptidase_M22_CS"/>
</dbReference>
<dbReference type="InterPro" id="IPR022450">
    <property type="entry name" value="TsaD"/>
</dbReference>
<dbReference type="NCBIfam" id="TIGR00329">
    <property type="entry name" value="gcp_kae1"/>
    <property type="match status" value="1"/>
</dbReference>
<dbReference type="NCBIfam" id="TIGR03723">
    <property type="entry name" value="T6A_TsaD_YgjD"/>
    <property type="match status" value="1"/>
</dbReference>
<dbReference type="PANTHER" id="PTHR11735">
    <property type="entry name" value="TRNA N6-ADENOSINE THREONYLCARBAMOYLTRANSFERASE"/>
    <property type="match status" value="1"/>
</dbReference>
<dbReference type="PANTHER" id="PTHR11735:SF6">
    <property type="entry name" value="TRNA N6-ADENOSINE THREONYLCARBAMOYLTRANSFERASE, MITOCHONDRIAL"/>
    <property type="match status" value="1"/>
</dbReference>
<dbReference type="Pfam" id="PF00814">
    <property type="entry name" value="TsaD"/>
    <property type="match status" value="1"/>
</dbReference>
<dbReference type="PRINTS" id="PR00789">
    <property type="entry name" value="OSIALOPTASE"/>
</dbReference>
<dbReference type="SUPFAM" id="SSF53067">
    <property type="entry name" value="Actin-like ATPase domain"/>
    <property type="match status" value="1"/>
</dbReference>
<dbReference type="PROSITE" id="PS01016">
    <property type="entry name" value="GLYCOPROTEASE"/>
    <property type="match status" value="1"/>
</dbReference>
<accession>B0BBH7</accession>
<evidence type="ECO:0000255" key="1">
    <source>
        <dbReference type="HAMAP-Rule" id="MF_01445"/>
    </source>
</evidence>